<accession>Q0TII6</accession>
<keyword id="KW-0274">FAD</keyword>
<keyword id="KW-0285">Flavoprotein</keyword>
<keyword id="KW-0560">Oxidoreductase</keyword>
<organism>
    <name type="scientific">Escherichia coli O6:K15:H31 (strain 536 / UPEC)</name>
    <dbReference type="NCBI Taxonomy" id="362663"/>
    <lineage>
        <taxon>Bacteria</taxon>
        <taxon>Pseudomonadati</taxon>
        <taxon>Pseudomonadota</taxon>
        <taxon>Gammaproteobacteria</taxon>
        <taxon>Enterobacterales</taxon>
        <taxon>Enterobacteriaceae</taxon>
        <taxon>Escherichia</taxon>
    </lineage>
</organism>
<reference key="1">
    <citation type="journal article" date="2006" name="Mol. Microbiol.">
        <title>Role of pathogenicity island-associated integrases in the genome plasticity of uropathogenic Escherichia coli strain 536.</title>
        <authorList>
            <person name="Hochhut B."/>
            <person name="Wilde C."/>
            <person name="Balling G."/>
            <person name="Middendorf B."/>
            <person name="Dobrindt U."/>
            <person name="Brzuszkiewicz E."/>
            <person name="Gottschalk G."/>
            <person name="Carniel E."/>
            <person name="Hacker J."/>
        </authorList>
    </citation>
    <scope>NUCLEOTIDE SEQUENCE [LARGE SCALE GENOMIC DNA]</scope>
    <source>
        <strain>536 / UPEC</strain>
    </source>
</reference>
<name>DADA_ECOL5</name>
<protein>
    <recommendedName>
        <fullName evidence="1">D-amino acid dehydrogenase</fullName>
        <ecNumber evidence="1">1.4.99.-</ecNumber>
    </recommendedName>
</protein>
<gene>
    <name evidence="1" type="primary">dadA</name>
    <name type="ordered locus">ECP_1232</name>
</gene>
<evidence type="ECO:0000255" key="1">
    <source>
        <dbReference type="HAMAP-Rule" id="MF_01202"/>
    </source>
</evidence>
<comment type="function">
    <text evidence="1">Oxidative deamination of D-amino acids.</text>
</comment>
<comment type="catalytic activity">
    <reaction evidence="1">
        <text>a D-alpha-amino acid + A + H2O = a 2-oxocarboxylate + AH2 + NH4(+)</text>
        <dbReference type="Rhea" id="RHEA:18125"/>
        <dbReference type="ChEBI" id="CHEBI:13193"/>
        <dbReference type="ChEBI" id="CHEBI:15377"/>
        <dbReference type="ChEBI" id="CHEBI:17499"/>
        <dbReference type="ChEBI" id="CHEBI:28938"/>
        <dbReference type="ChEBI" id="CHEBI:35179"/>
        <dbReference type="ChEBI" id="CHEBI:59871"/>
    </reaction>
</comment>
<comment type="cofactor">
    <cofactor evidence="1">
        <name>FAD</name>
        <dbReference type="ChEBI" id="CHEBI:57692"/>
    </cofactor>
</comment>
<comment type="pathway">
    <text>Amino-acid degradation; D-alanine degradation; NH(3) and pyruvate from D-alanine: step 1/1.</text>
</comment>
<comment type="similarity">
    <text evidence="1">Belongs to the DadA oxidoreductase family.</text>
</comment>
<feature type="chain" id="PRO_1000066092" description="D-amino acid dehydrogenase">
    <location>
        <begin position="1"/>
        <end position="432"/>
    </location>
</feature>
<feature type="binding site" evidence="1">
    <location>
        <begin position="3"/>
        <end position="17"/>
    </location>
    <ligand>
        <name>FAD</name>
        <dbReference type="ChEBI" id="CHEBI:57692"/>
    </ligand>
</feature>
<sequence>MRVVILGSGVVGVASAWYLNQAGHEVTVIDREPGAALETSAANAGQISPGYAAPWAAPGVPLKAIKWMFQRHAPLAVRLDGTQFQLKWMWQMLRNCDTSHYMENKGRMVRLAEYSRDCLKALRAETNIQYEGRQGGTLQLFRTEQQYENATRDIAVLEDAGVPYQLLESSRLAEVEPALAEVAHKLTGGLQLPNDETGDCQLFTQNLARMAEQAGVKFRFNTPVDQLLCDGEQIYGVKCGDEVIKADAYVMAFGSYSTAMLKGIVDIPVYPLKGYSLTIPIAQEDGAPVSTILDETYKIAITRFDNRIRVGGMAEIVGFNTELLQPRRETLEMVVRDLYPRGGHVEQATFWTGLRPMTPDGTPVVGRTRFKNLWLNTGHGTLGWTMACGSGQLLSDLLSGRTPAIPYEDLSVARYSRGFTPSRPGHLHGAHS</sequence>
<proteinExistence type="inferred from homology"/>
<dbReference type="EC" id="1.4.99.-" evidence="1"/>
<dbReference type="EMBL" id="CP000247">
    <property type="protein sequence ID" value="ABG69243.1"/>
    <property type="molecule type" value="Genomic_DNA"/>
</dbReference>
<dbReference type="RefSeq" id="WP_001266908.1">
    <property type="nucleotide sequence ID" value="NC_008253.1"/>
</dbReference>
<dbReference type="SMR" id="Q0TII6"/>
<dbReference type="GeneID" id="93776243"/>
<dbReference type="KEGG" id="ecp:ECP_1232"/>
<dbReference type="HOGENOM" id="CLU_007884_9_2_6"/>
<dbReference type="UniPathway" id="UPA00043">
    <property type="reaction ID" value="UER00498"/>
</dbReference>
<dbReference type="Proteomes" id="UP000009182">
    <property type="component" value="Chromosome"/>
</dbReference>
<dbReference type="GO" id="GO:0005737">
    <property type="term" value="C:cytoplasm"/>
    <property type="evidence" value="ECO:0007669"/>
    <property type="project" value="TreeGrafter"/>
</dbReference>
<dbReference type="GO" id="GO:0005886">
    <property type="term" value="C:plasma membrane"/>
    <property type="evidence" value="ECO:0007669"/>
    <property type="project" value="TreeGrafter"/>
</dbReference>
<dbReference type="GO" id="GO:0008718">
    <property type="term" value="F:D-amino-acid dehydrogenase activity"/>
    <property type="evidence" value="ECO:0007669"/>
    <property type="project" value="UniProtKB-UniRule"/>
</dbReference>
<dbReference type="GO" id="GO:0055130">
    <property type="term" value="P:D-alanine catabolic process"/>
    <property type="evidence" value="ECO:0007669"/>
    <property type="project" value="UniProtKB-UniPathway"/>
</dbReference>
<dbReference type="FunFam" id="3.50.50.60:FF:000020">
    <property type="entry name" value="D-amino acid dehydrogenase"/>
    <property type="match status" value="1"/>
</dbReference>
<dbReference type="Gene3D" id="3.30.9.10">
    <property type="entry name" value="D-Amino Acid Oxidase, subunit A, domain 2"/>
    <property type="match status" value="1"/>
</dbReference>
<dbReference type="Gene3D" id="3.50.50.60">
    <property type="entry name" value="FAD/NAD(P)-binding domain"/>
    <property type="match status" value="2"/>
</dbReference>
<dbReference type="HAMAP" id="MF_01202">
    <property type="entry name" value="DadA"/>
    <property type="match status" value="1"/>
</dbReference>
<dbReference type="InterPro" id="IPR023080">
    <property type="entry name" value="DadA"/>
</dbReference>
<dbReference type="InterPro" id="IPR006076">
    <property type="entry name" value="FAD-dep_OxRdtase"/>
</dbReference>
<dbReference type="InterPro" id="IPR036188">
    <property type="entry name" value="FAD/NAD-bd_sf"/>
</dbReference>
<dbReference type="NCBIfam" id="NF001933">
    <property type="entry name" value="PRK00711.1"/>
    <property type="match status" value="1"/>
</dbReference>
<dbReference type="PANTHER" id="PTHR13847:SF280">
    <property type="entry name" value="D-AMINO ACID DEHYDROGENASE"/>
    <property type="match status" value="1"/>
</dbReference>
<dbReference type="PANTHER" id="PTHR13847">
    <property type="entry name" value="SARCOSINE DEHYDROGENASE-RELATED"/>
    <property type="match status" value="1"/>
</dbReference>
<dbReference type="Pfam" id="PF01266">
    <property type="entry name" value="DAO"/>
    <property type="match status" value="1"/>
</dbReference>
<dbReference type="SUPFAM" id="SSF54373">
    <property type="entry name" value="FAD-linked reductases, C-terminal domain"/>
    <property type="match status" value="1"/>
</dbReference>
<dbReference type="SUPFAM" id="SSF51905">
    <property type="entry name" value="FAD/NAD(P)-binding domain"/>
    <property type="match status" value="1"/>
</dbReference>